<proteinExistence type="inferred from homology"/>
<gene>
    <name evidence="1" type="primary">sufE</name>
    <name type="ordered locus">EcolC_1952</name>
</gene>
<comment type="function">
    <text evidence="1">Participates in cysteine desulfuration mediated by SufS. Cysteine desulfuration mobilizes sulfur from L-cysteine to yield L-alanine and constitutes an essential step in sulfur metabolism for biosynthesis of a variety of sulfur-containing biomolecules. Functions as a sulfur acceptor for SufS, by mediating the direct transfer of the sulfur atom from the S-sulfanylcysteine of SufS, an intermediate product of cysteine desulfuration process.</text>
</comment>
<comment type="pathway">
    <text evidence="1">Cofactor biosynthesis; iron-sulfur cluster biosynthesis.</text>
</comment>
<comment type="subunit">
    <text evidence="1">Homodimer. Interacts with SufS.</text>
</comment>
<comment type="subcellular location">
    <subcellularLocation>
        <location evidence="1">Cytoplasm</location>
    </subcellularLocation>
</comment>
<comment type="similarity">
    <text evidence="1">Belongs to the SufE family.</text>
</comment>
<name>SUFE_ECOLC</name>
<accession>B1IQ77</accession>
<protein>
    <recommendedName>
        <fullName evidence="1">Cysteine desulfuration protein SufE</fullName>
    </recommendedName>
</protein>
<keyword id="KW-0963">Cytoplasm</keyword>
<sequence>MALLPDKEKLLRNFLRCANWEEKYLYIIELGQRLPELRDEDRSPQNSIQGCQSQVWIVMRQNAQGIIELQGDSDAAIVKGLIAVVFILYDQMTPQDIVNFDVRPWFEKMALTQHLTPSRSQGLEAMIRAIRAKAAALS</sequence>
<dbReference type="EMBL" id="CP000946">
    <property type="protein sequence ID" value="ACA77598.1"/>
    <property type="molecule type" value="Genomic_DNA"/>
</dbReference>
<dbReference type="RefSeq" id="WP_001196530.1">
    <property type="nucleotide sequence ID" value="NZ_MTFT01000006.1"/>
</dbReference>
<dbReference type="SMR" id="B1IQ77"/>
<dbReference type="KEGG" id="ecl:EcolC_1952"/>
<dbReference type="HOGENOM" id="CLU_124502_1_1_6"/>
<dbReference type="UniPathway" id="UPA00266"/>
<dbReference type="GO" id="GO:0005737">
    <property type="term" value="C:cytoplasm"/>
    <property type="evidence" value="ECO:0007669"/>
    <property type="project" value="UniProtKB-SubCell"/>
</dbReference>
<dbReference type="GO" id="GO:0016226">
    <property type="term" value="P:iron-sulfur cluster assembly"/>
    <property type="evidence" value="ECO:0007669"/>
    <property type="project" value="InterPro"/>
</dbReference>
<dbReference type="GO" id="GO:0006790">
    <property type="term" value="P:sulfur compound metabolic process"/>
    <property type="evidence" value="ECO:0007669"/>
    <property type="project" value="InterPro"/>
</dbReference>
<dbReference type="FunFam" id="3.90.1010.10:FF:000004">
    <property type="entry name" value="Cysteine desulfuration protein SufE"/>
    <property type="match status" value="1"/>
</dbReference>
<dbReference type="Gene3D" id="3.90.1010.10">
    <property type="match status" value="1"/>
</dbReference>
<dbReference type="HAMAP" id="MF_01832">
    <property type="entry name" value="SufE"/>
    <property type="match status" value="1"/>
</dbReference>
<dbReference type="InterPro" id="IPR023939">
    <property type="entry name" value="Cysteine_desulfuration_SufE"/>
</dbReference>
<dbReference type="InterPro" id="IPR003808">
    <property type="entry name" value="Fe-S_metab-assoc_dom"/>
</dbReference>
<dbReference type="NCBIfam" id="NF006792">
    <property type="entry name" value="PRK09296.1"/>
    <property type="match status" value="1"/>
</dbReference>
<dbReference type="PANTHER" id="PTHR43597:SF3">
    <property type="entry name" value="CYSTEINE DESULFURATION PROTEIN SUFE"/>
    <property type="match status" value="1"/>
</dbReference>
<dbReference type="PANTHER" id="PTHR43597">
    <property type="entry name" value="SULFUR ACCEPTOR PROTEIN CSDE"/>
    <property type="match status" value="1"/>
</dbReference>
<dbReference type="Pfam" id="PF02657">
    <property type="entry name" value="SufE"/>
    <property type="match status" value="1"/>
</dbReference>
<dbReference type="SUPFAM" id="SSF82649">
    <property type="entry name" value="SufE/NifU"/>
    <property type="match status" value="1"/>
</dbReference>
<evidence type="ECO:0000255" key="1">
    <source>
        <dbReference type="HAMAP-Rule" id="MF_01832"/>
    </source>
</evidence>
<reference key="1">
    <citation type="submission" date="2008-02" db="EMBL/GenBank/DDBJ databases">
        <title>Complete sequence of Escherichia coli C str. ATCC 8739.</title>
        <authorList>
            <person name="Copeland A."/>
            <person name="Lucas S."/>
            <person name="Lapidus A."/>
            <person name="Glavina del Rio T."/>
            <person name="Dalin E."/>
            <person name="Tice H."/>
            <person name="Bruce D."/>
            <person name="Goodwin L."/>
            <person name="Pitluck S."/>
            <person name="Kiss H."/>
            <person name="Brettin T."/>
            <person name="Detter J.C."/>
            <person name="Han C."/>
            <person name="Kuske C.R."/>
            <person name="Schmutz J."/>
            <person name="Larimer F."/>
            <person name="Land M."/>
            <person name="Hauser L."/>
            <person name="Kyrpides N."/>
            <person name="Mikhailova N."/>
            <person name="Ingram L."/>
            <person name="Richardson P."/>
        </authorList>
    </citation>
    <scope>NUCLEOTIDE SEQUENCE [LARGE SCALE GENOMIC DNA]</scope>
    <source>
        <strain>ATCC 8739 / DSM 1576 / NBRC 3972 / NCIMB 8545 / WDCM 00012 / Crooks</strain>
    </source>
</reference>
<organism>
    <name type="scientific">Escherichia coli (strain ATCC 8739 / DSM 1576 / NBRC 3972 / NCIMB 8545 / WDCM 00012 / Crooks)</name>
    <dbReference type="NCBI Taxonomy" id="481805"/>
    <lineage>
        <taxon>Bacteria</taxon>
        <taxon>Pseudomonadati</taxon>
        <taxon>Pseudomonadota</taxon>
        <taxon>Gammaproteobacteria</taxon>
        <taxon>Enterobacterales</taxon>
        <taxon>Enterobacteriaceae</taxon>
        <taxon>Escherichia</taxon>
    </lineage>
</organism>
<feature type="chain" id="PRO_1000088435" description="Cysteine desulfuration protein SufE">
    <location>
        <begin position="1"/>
        <end position="138"/>
    </location>
</feature>
<feature type="active site" description="Cysteine persulfide intermediate" evidence="1">
    <location>
        <position position="51"/>
    </location>
</feature>